<name>NAGZ_NEIG2</name>
<comment type="function">
    <text evidence="1">Plays a role in peptidoglycan recycling by cleaving the terminal beta-1,4-linked N-acetylglucosamine (GlcNAc) from peptide-linked peptidoglycan fragments, giving rise to free GlcNAc, anhydro-N-acetylmuramic acid and anhydro-N-acetylmuramic acid-linked peptides.</text>
</comment>
<comment type="catalytic activity">
    <reaction evidence="1">
        <text>Hydrolysis of terminal non-reducing N-acetyl-D-hexosamine residues in N-acetyl-beta-D-hexosaminides.</text>
        <dbReference type="EC" id="3.2.1.52"/>
    </reaction>
</comment>
<comment type="pathway">
    <text evidence="1">Cell wall biogenesis; peptidoglycan recycling.</text>
</comment>
<comment type="subcellular location">
    <subcellularLocation>
        <location evidence="1">Cytoplasm</location>
    </subcellularLocation>
</comment>
<comment type="similarity">
    <text evidence="1">Belongs to the glycosyl hydrolase 3 family. NagZ subfamily.</text>
</comment>
<proteinExistence type="inferred from homology"/>
<keyword id="KW-0131">Cell cycle</keyword>
<keyword id="KW-0132">Cell division</keyword>
<keyword id="KW-0133">Cell shape</keyword>
<keyword id="KW-0961">Cell wall biogenesis/degradation</keyword>
<keyword id="KW-0963">Cytoplasm</keyword>
<keyword id="KW-0326">Glycosidase</keyword>
<keyword id="KW-0378">Hydrolase</keyword>
<keyword id="KW-0573">Peptidoglycan synthesis</keyword>
<feature type="chain" id="PRO_1000121064" description="Beta-hexosaminidase">
    <location>
        <begin position="1"/>
        <end position="361"/>
    </location>
</feature>
<feature type="active site" description="Proton donor/acceptor" evidence="1">
    <location>
        <position position="187"/>
    </location>
</feature>
<feature type="active site" description="Nucleophile" evidence="1">
    <location>
        <position position="258"/>
    </location>
</feature>
<feature type="binding site" evidence="1">
    <location>
        <position position="69"/>
    </location>
    <ligand>
        <name>substrate</name>
    </ligand>
</feature>
<feature type="binding site" evidence="1">
    <location>
        <position position="77"/>
    </location>
    <ligand>
        <name>substrate</name>
    </ligand>
</feature>
<feature type="binding site" evidence="1">
    <location>
        <position position="144"/>
    </location>
    <ligand>
        <name>substrate</name>
    </ligand>
</feature>
<feature type="binding site" evidence="1">
    <location>
        <begin position="174"/>
        <end position="175"/>
    </location>
    <ligand>
        <name>substrate</name>
    </ligand>
</feature>
<feature type="site" description="Important for catalytic activity" evidence="1">
    <location>
        <position position="185"/>
    </location>
</feature>
<protein>
    <recommendedName>
        <fullName evidence="1">Beta-hexosaminidase</fullName>
        <ecNumber evidence="1">3.2.1.52</ecNumber>
    </recommendedName>
    <alternativeName>
        <fullName evidence="1">Beta-N-acetylhexosaminidase</fullName>
    </alternativeName>
    <alternativeName>
        <fullName evidence="1">N-acetyl-beta-glucosaminidase</fullName>
    </alternativeName>
</protein>
<sequence length="361" mass="39211">MTVPHIPRGPVMADIAAFRLTEEEKQRLLDPAIGGIILFRRNFQNIEQLKTLTAEIKALRTPELIIAVDHEGGRVQRFIEGFTRLPAMSTLGEIWDSEGAETAETHAEHIGWVLATELSACGIDLSFTPVLDLDWGNCAVIGNRSFHRNPEAVARLALALQKGLAKGGMKSCGKHFPGHGFVEGDSHLVLPEDGRSLDELEAADLAPFRIMSREGMAAVMPAHVVYPQVDTKPAGFSEIWLKQILRRDIGFKGVIFSDDLTMEGACGAGGIKERARISFEAGCDIILVCNRPDLVDELRDGFTIPDNQDLAGRWQYMENSLGHEAVQAVIQTTGFQAAQAFVAGLASPQDTAGGVKVGEAF</sequence>
<accession>B4RQ67</accession>
<dbReference type="EC" id="3.2.1.52" evidence="1"/>
<dbReference type="EMBL" id="CP001050">
    <property type="protein sequence ID" value="ACF28879.1"/>
    <property type="molecule type" value="Genomic_DNA"/>
</dbReference>
<dbReference type="RefSeq" id="WP_003690594.1">
    <property type="nucleotide sequence ID" value="NC_011035.1"/>
</dbReference>
<dbReference type="SMR" id="B4RQ67"/>
<dbReference type="CAZy" id="GH3">
    <property type="family name" value="Glycoside Hydrolase Family 3"/>
</dbReference>
<dbReference type="GeneID" id="66752401"/>
<dbReference type="KEGG" id="ngk:NGK_0181"/>
<dbReference type="HOGENOM" id="CLU_008392_0_0_4"/>
<dbReference type="UniPathway" id="UPA00544"/>
<dbReference type="Proteomes" id="UP000002564">
    <property type="component" value="Chromosome"/>
</dbReference>
<dbReference type="GO" id="GO:0005737">
    <property type="term" value="C:cytoplasm"/>
    <property type="evidence" value="ECO:0007669"/>
    <property type="project" value="UniProtKB-SubCell"/>
</dbReference>
<dbReference type="GO" id="GO:0004563">
    <property type="term" value="F:beta-N-acetylhexosaminidase activity"/>
    <property type="evidence" value="ECO:0007669"/>
    <property type="project" value="UniProtKB-UniRule"/>
</dbReference>
<dbReference type="GO" id="GO:0005975">
    <property type="term" value="P:carbohydrate metabolic process"/>
    <property type="evidence" value="ECO:0007669"/>
    <property type="project" value="InterPro"/>
</dbReference>
<dbReference type="GO" id="GO:0051301">
    <property type="term" value="P:cell division"/>
    <property type="evidence" value="ECO:0007669"/>
    <property type="project" value="UniProtKB-KW"/>
</dbReference>
<dbReference type="GO" id="GO:0071555">
    <property type="term" value="P:cell wall organization"/>
    <property type="evidence" value="ECO:0007669"/>
    <property type="project" value="UniProtKB-KW"/>
</dbReference>
<dbReference type="GO" id="GO:0009252">
    <property type="term" value="P:peptidoglycan biosynthetic process"/>
    <property type="evidence" value="ECO:0007669"/>
    <property type="project" value="UniProtKB-KW"/>
</dbReference>
<dbReference type="GO" id="GO:0009254">
    <property type="term" value="P:peptidoglycan turnover"/>
    <property type="evidence" value="ECO:0007669"/>
    <property type="project" value="UniProtKB-UniRule"/>
</dbReference>
<dbReference type="GO" id="GO:0008360">
    <property type="term" value="P:regulation of cell shape"/>
    <property type="evidence" value="ECO:0007669"/>
    <property type="project" value="UniProtKB-KW"/>
</dbReference>
<dbReference type="FunFam" id="3.20.20.300:FF:000001">
    <property type="entry name" value="Beta-hexosaminidase"/>
    <property type="match status" value="1"/>
</dbReference>
<dbReference type="Gene3D" id="3.20.20.300">
    <property type="entry name" value="Glycoside hydrolase, family 3, N-terminal domain"/>
    <property type="match status" value="1"/>
</dbReference>
<dbReference type="HAMAP" id="MF_00364">
    <property type="entry name" value="NagZ"/>
    <property type="match status" value="1"/>
</dbReference>
<dbReference type="InterPro" id="IPR022956">
    <property type="entry name" value="Beta_hexosaminidase_bac"/>
</dbReference>
<dbReference type="InterPro" id="IPR019800">
    <property type="entry name" value="Glyco_hydro_3_AS"/>
</dbReference>
<dbReference type="InterPro" id="IPR001764">
    <property type="entry name" value="Glyco_hydro_3_N"/>
</dbReference>
<dbReference type="InterPro" id="IPR036962">
    <property type="entry name" value="Glyco_hydro_3_N_sf"/>
</dbReference>
<dbReference type="InterPro" id="IPR017853">
    <property type="entry name" value="Glycoside_hydrolase_SF"/>
</dbReference>
<dbReference type="InterPro" id="IPR050226">
    <property type="entry name" value="NagZ_Beta-hexosaminidase"/>
</dbReference>
<dbReference type="NCBIfam" id="NF003740">
    <property type="entry name" value="PRK05337.1"/>
    <property type="match status" value="1"/>
</dbReference>
<dbReference type="PANTHER" id="PTHR30480:SF13">
    <property type="entry name" value="BETA-HEXOSAMINIDASE"/>
    <property type="match status" value="1"/>
</dbReference>
<dbReference type="PANTHER" id="PTHR30480">
    <property type="entry name" value="BETA-HEXOSAMINIDASE-RELATED"/>
    <property type="match status" value="1"/>
</dbReference>
<dbReference type="Pfam" id="PF00933">
    <property type="entry name" value="Glyco_hydro_3"/>
    <property type="match status" value="1"/>
</dbReference>
<dbReference type="SUPFAM" id="SSF51445">
    <property type="entry name" value="(Trans)glycosidases"/>
    <property type="match status" value="1"/>
</dbReference>
<dbReference type="PROSITE" id="PS00775">
    <property type="entry name" value="GLYCOSYL_HYDROL_F3"/>
    <property type="match status" value="1"/>
</dbReference>
<evidence type="ECO:0000255" key="1">
    <source>
        <dbReference type="HAMAP-Rule" id="MF_00364"/>
    </source>
</evidence>
<gene>
    <name evidence="1" type="primary">nagZ</name>
    <name type="ordered locus">NGK_0181</name>
</gene>
<organism>
    <name type="scientific">Neisseria gonorrhoeae (strain NCCP11945)</name>
    <dbReference type="NCBI Taxonomy" id="521006"/>
    <lineage>
        <taxon>Bacteria</taxon>
        <taxon>Pseudomonadati</taxon>
        <taxon>Pseudomonadota</taxon>
        <taxon>Betaproteobacteria</taxon>
        <taxon>Neisseriales</taxon>
        <taxon>Neisseriaceae</taxon>
        <taxon>Neisseria</taxon>
    </lineage>
</organism>
<reference key="1">
    <citation type="journal article" date="2008" name="J. Bacteriol.">
        <title>Complete genome sequence of Neisseria gonorrhoeae NCCP11945.</title>
        <authorList>
            <person name="Chung G.T."/>
            <person name="Yoo J.S."/>
            <person name="Oh H.B."/>
            <person name="Lee Y.S."/>
            <person name="Cha S.H."/>
            <person name="Kim S.J."/>
            <person name="Yoo C.K."/>
        </authorList>
    </citation>
    <scope>NUCLEOTIDE SEQUENCE [LARGE SCALE GENOMIC DNA]</scope>
    <source>
        <strain>NCCP11945</strain>
    </source>
</reference>